<gene>
    <name evidence="1" type="primary">HCR1</name>
    <name type="ordered locus">ACR229W</name>
</gene>
<organism>
    <name type="scientific">Eremothecium gossypii (strain ATCC 10895 / CBS 109.51 / FGSC 9923 / NRRL Y-1056)</name>
    <name type="common">Yeast</name>
    <name type="synonym">Ashbya gossypii</name>
    <dbReference type="NCBI Taxonomy" id="284811"/>
    <lineage>
        <taxon>Eukaryota</taxon>
        <taxon>Fungi</taxon>
        <taxon>Dikarya</taxon>
        <taxon>Ascomycota</taxon>
        <taxon>Saccharomycotina</taxon>
        <taxon>Saccharomycetes</taxon>
        <taxon>Saccharomycetales</taxon>
        <taxon>Saccharomycetaceae</taxon>
        <taxon>Eremothecium</taxon>
    </lineage>
</organism>
<protein>
    <recommendedName>
        <fullName evidence="1">Eukaryotic translation initiation factor 3 subunit J</fullName>
        <shortName evidence="1">eIF3j</shortName>
    </recommendedName>
    <alternativeName>
        <fullName>Eukaryotic translation initiation factor 3 30 kDa subunit</fullName>
        <shortName>eIF-3 30 kDa</shortName>
    </alternativeName>
</protein>
<proteinExistence type="inferred from homology"/>
<dbReference type="EMBL" id="AE016816">
    <property type="protein sequence ID" value="AAS51455.1"/>
    <property type="molecule type" value="Genomic_DNA"/>
</dbReference>
<dbReference type="RefSeq" id="NP_983631.1">
    <property type="nucleotide sequence ID" value="NM_208984.1"/>
</dbReference>
<dbReference type="SMR" id="Q75BP2"/>
<dbReference type="FunCoup" id="Q75BP2">
    <property type="interactions" value="123"/>
</dbReference>
<dbReference type="STRING" id="284811.Q75BP2"/>
<dbReference type="EnsemblFungi" id="AAS51455">
    <property type="protein sequence ID" value="AAS51455"/>
    <property type="gene ID" value="AGOS_ACR229W"/>
</dbReference>
<dbReference type="GeneID" id="4619763"/>
<dbReference type="KEGG" id="ago:AGOS_ACR229W"/>
<dbReference type="eggNOG" id="KOG4813">
    <property type="taxonomic scope" value="Eukaryota"/>
</dbReference>
<dbReference type="HOGENOM" id="CLU_085412_0_0_1"/>
<dbReference type="InParanoid" id="Q75BP2"/>
<dbReference type="OMA" id="MESWDAE"/>
<dbReference type="OrthoDB" id="20381at2759"/>
<dbReference type="Proteomes" id="UP000000591">
    <property type="component" value="Chromosome III"/>
</dbReference>
<dbReference type="GO" id="GO:0016282">
    <property type="term" value="C:eukaryotic 43S preinitiation complex"/>
    <property type="evidence" value="ECO:0007669"/>
    <property type="project" value="UniProtKB-UniRule"/>
</dbReference>
<dbReference type="GO" id="GO:0033290">
    <property type="term" value="C:eukaryotic 48S preinitiation complex"/>
    <property type="evidence" value="ECO:0007669"/>
    <property type="project" value="UniProtKB-UniRule"/>
</dbReference>
<dbReference type="GO" id="GO:0005852">
    <property type="term" value="C:eukaryotic translation initiation factor 3 complex"/>
    <property type="evidence" value="ECO:0000318"/>
    <property type="project" value="GO_Central"/>
</dbReference>
<dbReference type="GO" id="GO:0003743">
    <property type="term" value="F:translation initiation factor activity"/>
    <property type="evidence" value="ECO:0007669"/>
    <property type="project" value="UniProtKB-UniRule"/>
</dbReference>
<dbReference type="GO" id="GO:0001732">
    <property type="term" value="P:formation of cytoplasmic translation initiation complex"/>
    <property type="evidence" value="ECO:0007669"/>
    <property type="project" value="UniProtKB-UniRule"/>
</dbReference>
<dbReference type="GO" id="GO:0000462">
    <property type="term" value="P:maturation of SSU-rRNA from tricistronic rRNA transcript (SSU-rRNA, 5.8S rRNA, LSU-rRNA)"/>
    <property type="evidence" value="ECO:0007669"/>
    <property type="project" value="EnsemblFungi"/>
</dbReference>
<dbReference type="GO" id="GO:0000184">
    <property type="term" value="P:nuclear-transcribed mRNA catabolic process, nonsense-mediated decay"/>
    <property type="evidence" value="ECO:0007669"/>
    <property type="project" value="EnsemblFungi"/>
</dbReference>
<dbReference type="Gene3D" id="1.10.246.60">
    <property type="entry name" value="Eukaryotic translation initiation factor 3 like domains"/>
    <property type="match status" value="1"/>
</dbReference>
<dbReference type="HAMAP" id="MF_03009">
    <property type="entry name" value="eIF3j"/>
    <property type="match status" value="1"/>
</dbReference>
<dbReference type="InterPro" id="IPR023194">
    <property type="entry name" value="eIF3-like_dom_sf"/>
</dbReference>
<dbReference type="InterPro" id="IPR013906">
    <property type="entry name" value="eIF3j"/>
</dbReference>
<dbReference type="PANTHER" id="PTHR21681">
    <property type="entry name" value="EUKARYOTIC TRANSLATION INITIATION FACTOR 3 SUBUNIT J"/>
    <property type="match status" value="1"/>
</dbReference>
<dbReference type="PANTHER" id="PTHR21681:SF0">
    <property type="entry name" value="EUKARYOTIC TRANSLATION INITIATION FACTOR 3 SUBUNIT J"/>
    <property type="match status" value="1"/>
</dbReference>
<dbReference type="Pfam" id="PF08597">
    <property type="entry name" value="eIF3_subunit"/>
    <property type="match status" value="1"/>
</dbReference>
<name>EIF3J_EREGS</name>
<sequence length="268" mass="29639">MSWDDEEFEVRTSTKDQPMVVSWDDEFNNDDDDALLESWDAEEVPKQKQKPKAAPKAAKKVDKKGETVLLEIDTLDEKTRKELLKKAELNSDLNNAAALFDGLGVAEEHPRARALRQEEELAALSRPAALTKQTPFESHPLFSEAETKSDFQDLRKALSTAIAGMAEKSSLNYSGALAIDLIRDVAKPLSIESIRQTVATLNVLIKEKERQERQARLAKVKGGTATGGAGKKKAKAARPNLGGAFKKDQEFSLEDNSEFADFGDDDFM</sequence>
<comment type="function">
    <text evidence="1">Component of the eukaryotic translation initiation factor 3 (eIF-3) complex, which is involved in protein synthesis of a specialized repertoire of mRNAs and, together with other initiation factors, stimulates binding of mRNA and methionyl-tRNAi to the 40S ribosome. The eIF-3 complex specifically targets and initiates translation of a subset of mRNAs involved in cell proliferation.</text>
</comment>
<comment type="subunit">
    <text evidence="1">Component of the eukaryotic translation initiation factor 3 (eIF-3) complex.</text>
</comment>
<comment type="subcellular location">
    <subcellularLocation>
        <location evidence="1">Cytoplasm</location>
    </subcellularLocation>
</comment>
<comment type="similarity">
    <text evidence="1">Belongs to the eIF-3 subunit J family.</text>
</comment>
<feature type="chain" id="PRO_0000365145" description="Eukaryotic translation initiation factor 3 subunit J">
    <location>
        <begin position="1"/>
        <end position="268"/>
    </location>
</feature>
<feature type="region of interest" description="Disordered" evidence="2">
    <location>
        <begin position="1"/>
        <end position="27"/>
    </location>
</feature>
<feature type="region of interest" description="Disordered" evidence="2">
    <location>
        <begin position="40"/>
        <end position="63"/>
    </location>
</feature>
<feature type="region of interest" description="Disordered" evidence="2">
    <location>
        <begin position="217"/>
        <end position="249"/>
    </location>
</feature>
<feature type="coiled-coil region" evidence="1">
    <location>
        <begin position="191"/>
        <end position="221"/>
    </location>
</feature>
<feature type="compositionally biased region" description="Basic residues" evidence="2">
    <location>
        <begin position="47"/>
        <end position="58"/>
    </location>
</feature>
<evidence type="ECO:0000255" key="1">
    <source>
        <dbReference type="HAMAP-Rule" id="MF_03009"/>
    </source>
</evidence>
<evidence type="ECO:0000256" key="2">
    <source>
        <dbReference type="SAM" id="MobiDB-lite"/>
    </source>
</evidence>
<reference key="1">
    <citation type="journal article" date="2004" name="Science">
        <title>The Ashbya gossypii genome as a tool for mapping the ancient Saccharomyces cerevisiae genome.</title>
        <authorList>
            <person name="Dietrich F.S."/>
            <person name="Voegeli S."/>
            <person name="Brachat S."/>
            <person name="Lerch A."/>
            <person name="Gates K."/>
            <person name="Steiner S."/>
            <person name="Mohr C."/>
            <person name="Poehlmann R."/>
            <person name="Luedi P."/>
            <person name="Choi S."/>
            <person name="Wing R.A."/>
            <person name="Flavier A."/>
            <person name="Gaffney T.D."/>
            <person name="Philippsen P."/>
        </authorList>
    </citation>
    <scope>NUCLEOTIDE SEQUENCE [LARGE SCALE GENOMIC DNA]</scope>
    <source>
        <strain>ATCC 10895 / CBS 109.51 / FGSC 9923 / NRRL Y-1056</strain>
    </source>
</reference>
<reference key="2">
    <citation type="journal article" date="2013" name="G3 (Bethesda)">
        <title>Genomes of Ashbya fungi isolated from insects reveal four mating-type loci, numerous translocations, lack of transposons, and distinct gene duplications.</title>
        <authorList>
            <person name="Dietrich F.S."/>
            <person name="Voegeli S."/>
            <person name="Kuo S."/>
            <person name="Philippsen P."/>
        </authorList>
    </citation>
    <scope>GENOME REANNOTATION</scope>
    <source>
        <strain>ATCC 10895 / CBS 109.51 / FGSC 9923 / NRRL Y-1056</strain>
    </source>
</reference>
<accession>Q75BP2</accession>
<keyword id="KW-0175">Coiled coil</keyword>
<keyword id="KW-0963">Cytoplasm</keyword>
<keyword id="KW-0396">Initiation factor</keyword>
<keyword id="KW-0648">Protein biosynthesis</keyword>
<keyword id="KW-1185">Reference proteome</keyword>